<keyword id="KW-0408">Iron</keyword>
<keyword id="KW-0456">Lyase</keyword>
<keyword id="KW-0464">Manganese</keyword>
<keyword id="KW-1185">Reference proteome</keyword>
<feature type="chain" id="PRO_0000170685" description="Mannonate dehydratase">
    <location>
        <begin position="1"/>
        <end position="394"/>
    </location>
</feature>
<feature type="sequence conflict" description="In Ref. 2." evidence="2" ref="2">
    <original>G</original>
    <variation>A</variation>
    <location>
        <position position="23"/>
    </location>
</feature>
<feature type="sequence conflict" description="In Ref. 2." evidence="2" ref="2">
    <original>DE</original>
    <variation>AK</variation>
    <location>
        <begin position="43"/>
        <end position="44"/>
    </location>
</feature>
<protein>
    <recommendedName>
        <fullName>Mannonate dehydratase</fullName>
        <ecNumber>4.2.1.8</ecNumber>
    </recommendedName>
    <alternativeName>
        <fullName>D-mannonate hydro-lyase</fullName>
    </alternativeName>
</protein>
<organism>
    <name type="scientific">Salmonella typhimurium (strain LT2 / SGSC1412 / ATCC 700720)</name>
    <dbReference type="NCBI Taxonomy" id="99287"/>
    <lineage>
        <taxon>Bacteria</taxon>
        <taxon>Pseudomonadati</taxon>
        <taxon>Pseudomonadota</taxon>
        <taxon>Gammaproteobacteria</taxon>
        <taxon>Enterobacterales</taxon>
        <taxon>Enterobacteriaceae</taxon>
        <taxon>Salmonella</taxon>
    </lineage>
</organism>
<name>UXUA_SALTY</name>
<proteinExistence type="inferred from homology"/>
<gene>
    <name type="primary">uxuA</name>
    <name type="ordered locus">STM3135</name>
</gene>
<reference key="1">
    <citation type="journal article" date="2001" name="Nature">
        <title>Complete genome sequence of Salmonella enterica serovar Typhimurium LT2.</title>
        <authorList>
            <person name="McClelland M."/>
            <person name="Sanderson K.E."/>
            <person name="Spieth J."/>
            <person name="Clifton S.W."/>
            <person name="Latreille P."/>
            <person name="Courtney L."/>
            <person name="Porwollik S."/>
            <person name="Ali J."/>
            <person name="Dante M."/>
            <person name="Du F."/>
            <person name="Hou S."/>
            <person name="Layman D."/>
            <person name="Leonard S."/>
            <person name="Nguyen C."/>
            <person name="Scott K."/>
            <person name="Holmes A."/>
            <person name="Grewal N."/>
            <person name="Mulvaney E."/>
            <person name="Ryan E."/>
            <person name="Sun H."/>
            <person name="Florea L."/>
            <person name="Miller W."/>
            <person name="Stoneking T."/>
            <person name="Nhan M."/>
            <person name="Waterston R."/>
            <person name="Wilson R.K."/>
        </authorList>
    </citation>
    <scope>NUCLEOTIDE SEQUENCE [LARGE SCALE GENOMIC DNA]</scope>
    <source>
        <strain>LT2 / SGSC1412 / ATCC 700720</strain>
    </source>
</reference>
<reference key="2">
    <citation type="journal article" date="1994" name="Infect. Immun.">
        <title>Salmonella typhimurium loci involved in survival within macrophages.</title>
        <authorList>
            <person name="Baumler A.J."/>
            <person name="Kusters J.G."/>
            <person name="Stojiljkovic I."/>
            <person name="Heffron F."/>
        </authorList>
    </citation>
    <scope>NUCLEOTIDE SEQUENCE [GENOMIC DNA] OF 20-50</scope>
    <source>
        <strain>ATCC 14028 / Isolates MS1633/MS6290</strain>
    </source>
</reference>
<reference key="3">
    <citation type="unpublished observations" date="1995-07">
        <authorList>
            <person name="Rudd K.E."/>
        </authorList>
    </citation>
    <scope>IDENTIFICATION</scope>
</reference>
<accession>P0A2M7</accession>
<accession>P43668</accession>
<comment type="function">
    <text evidence="1">Catalyzes the dehydration of D-mannonate.</text>
</comment>
<comment type="catalytic activity">
    <reaction>
        <text>D-mannonate = 2-dehydro-3-deoxy-D-gluconate + H2O</text>
        <dbReference type="Rhea" id="RHEA:20097"/>
        <dbReference type="ChEBI" id="CHEBI:15377"/>
        <dbReference type="ChEBI" id="CHEBI:17767"/>
        <dbReference type="ChEBI" id="CHEBI:57990"/>
        <dbReference type="EC" id="4.2.1.8"/>
    </reaction>
</comment>
<comment type="cofactor">
    <cofactor evidence="1">
        <name>Fe(2+)</name>
        <dbReference type="ChEBI" id="CHEBI:29033"/>
    </cofactor>
    <cofactor evidence="1">
        <name>Mn(2+)</name>
        <dbReference type="ChEBI" id="CHEBI:29035"/>
    </cofactor>
</comment>
<comment type="pathway">
    <text>Carbohydrate metabolism; pentose and glucuronate interconversion.</text>
</comment>
<comment type="similarity">
    <text evidence="2">Belongs to the mannonate dehydratase family.</text>
</comment>
<sequence length="394" mass="44937">MKQTWRWYGPNDPVTLSDVRQAGATGVVTALHHIPNGEIWSVDEIQKRKAIVEEAGLEWSVVESVPIHEDIKTHTGQYDLWIKNYQQTLRNLAQCGIYTVCYNFMPVLDWTRTDLEYVLPDGSKALRFDQIEFAAFELHILKRPGAEADYTAEEIAQAERRFATMSEEDKARLTRNIIAGLPGAEEGYTLDQFRQHLATYKDIDKAKLREHFAYFLKAIIPVADEVGVRMAVHPDDPPRPILGLPRIVSTIEDMQWMVETVNSMANGFTMCTGSYGVRADNDLVDMIKQFGPRIYFTHLRSTLREENPKTFHEAAHLHGDVDMYEVVKAIVEEEHRRKAEGSDDLIPMRPDHGHQMLDDLKKKTNPGYSAIGRLKGLAEVRGVELAIQRAFFSK</sequence>
<evidence type="ECO:0000250" key="1"/>
<evidence type="ECO:0000305" key="2"/>
<dbReference type="EC" id="4.2.1.8"/>
<dbReference type="EMBL" id="AE006468">
    <property type="protein sequence ID" value="AAL22009.1"/>
    <property type="molecule type" value="Genomic_DNA"/>
</dbReference>
<dbReference type="EMBL" id="U06130">
    <property type="status" value="NOT_ANNOTATED_CDS"/>
    <property type="molecule type" value="Genomic_DNA"/>
</dbReference>
<dbReference type="EMBL" id="U06140">
    <property type="status" value="NOT_ANNOTATED_CDS"/>
    <property type="molecule type" value="Genomic_DNA"/>
</dbReference>
<dbReference type="RefSeq" id="NP_462050.1">
    <property type="nucleotide sequence ID" value="NC_003197.2"/>
</dbReference>
<dbReference type="RefSeq" id="WP_000815487.1">
    <property type="nucleotide sequence ID" value="NC_003197.2"/>
</dbReference>
<dbReference type="SMR" id="P0A2M7"/>
<dbReference type="STRING" id="99287.STM3135"/>
<dbReference type="PaxDb" id="99287-STM3135"/>
<dbReference type="GeneID" id="1254658"/>
<dbReference type="KEGG" id="stm:STM3135"/>
<dbReference type="PATRIC" id="fig|99287.12.peg.3323"/>
<dbReference type="HOGENOM" id="CLU_058621_2_0_6"/>
<dbReference type="OMA" id="ANHLEGD"/>
<dbReference type="PhylomeDB" id="P0A2M7"/>
<dbReference type="BioCyc" id="SENT99287:STM3135-MONOMER"/>
<dbReference type="UniPathway" id="UPA00246"/>
<dbReference type="Proteomes" id="UP000001014">
    <property type="component" value="Chromosome"/>
</dbReference>
<dbReference type="GO" id="GO:0008198">
    <property type="term" value="F:ferrous iron binding"/>
    <property type="evidence" value="ECO:0000318"/>
    <property type="project" value="GO_Central"/>
</dbReference>
<dbReference type="GO" id="GO:0030145">
    <property type="term" value="F:manganese ion binding"/>
    <property type="evidence" value="ECO:0000318"/>
    <property type="project" value="GO_Central"/>
</dbReference>
<dbReference type="GO" id="GO:0008927">
    <property type="term" value="F:mannonate dehydratase activity"/>
    <property type="evidence" value="ECO:0000318"/>
    <property type="project" value="GO_Central"/>
</dbReference>
<dbReference type="GO" id="GO:0042840">
    <property type="term" value="P:D-glucuronate catabolic process"/>
    <property type="evidence" value="ECO:0000318"/>
    <property type="project" value="GO_Central"/>
</dbReference>
<dbReference type="FunFam" id="3.20.20.150:FF:000004">
    <property type="entry name" value="Mannonate dehydratase"/>
    <property type="match status" value="1"/>
</dbReference>
<dbReference type="FunFam" id="3.20.20.150:FF:000005">
    <property type="entry name" value="Mannonate dehydratase"/>
    <property type="match status" value="1"/>
</dbReference>
<dbReference type="Gene3D" id="3.20.20.150">
    <property type="entry name" value="Divalent-metal-dependent TIM barrel enzymes"/>
    <property type="match status" value="2"/>
</dbReference>
<dbReference type="HAMAP" id="MF_00106">
    <property type="entry name" value="UxuA"/>
    <property type="match status" value="1"/>
</dbReference>
<dbReference type="InterPro" id="IPR004628">
    <property type="entry name" value="Man_deHydtase"/>
</dbReference>
<dbReference type="InterPro" id="IPR036237">
    <property type="entry name" value="Xyl_isomerase-like_sf"/>
</dbReference>
<dbReference type="NCBIfam" id="NF003027">
    <property type="entry name" value="PRK03906.1"/>
    <property type="match status" value="1"/>
</dbReference>
<dbReference type="NCBIfam" id="TIGR00695">
    <property type="entry name" value="uxuA"/>
    <property type="match status" value="1"/>
</dbReference>
<dbReference type="PANTHER" id="PTHR30387">
    <property type="entry name" value="MANNONATE DEHYDRATASE"/>
    <property type="match status" value="1"/>
</dbReference>
<dbReference type="PANTHER" id="PTHR30387:SF2">
    <property type="entry name" value="MANNONATE DEHYDRATASE"/>
    <property type="match status" value="1"/>
</dbReference>
<dbReference type="Pfam" id="PF03786">
    <property type="entry name" value="UxuA"/>
    <property type="match status" value="1"/>
</dbReference>
<dbReference type="PIRSF" id="PIRSF016049">
    <property type="entry name" value="Man_dehyd"/>
    <property type="match status" value="1"/>
</dbReference>
<dbReference type="SUPFAM" id="SSF51658">
    <property type="entry name" value="Xylose isomerase-like"/>
    <property type="match status" value="1"/>
</dbReference>